<organism>
    <name type="scientific">Drosophila erecta</name>
    <name type="common">Fruit fly</name>
    <dbReference type="NCBI Taxonomy" id="7220"/>
    <lineage>
        <taxon>Eukaryota</taxon>
        <taxon>Metazoa</taxon>
        <taxon>Ecdysozoa</taxon>
        <taxon>Arthropoda</taxon>
        <taxon>Hexapoda</taxon>
        <taxon>Insecta</taxon>
        <taxon>Pterygota</taxon>
        <taxon>Neoptera</taxon>
        <taxon>Endopterygota</taxon>
        <taxon>Diptera</taxon>
        <taxon>Brachycera</taxon>
        <taxon>Muscomorpha</taxon>
        <taxon>Ephydroidea</taxon>
        <taxon>Drosophilidae</taxon>
        <taxon>Drosophila</taxon>
        <taxon>Sophophora</taxon>
    </lineage>
</organism>
<name>TRYU_DROER</name>
<evidence type="ECO:0000250" key="1"/>
<evidence type="ECO:0000255" key="2"/>
<evidence type="ECO:0000255" key="3">
    <source>
        <dbReference type="PROSITE-ProRule" id="PRU00274"/>
    </source>
</evidence>
<feature type="signal peptide" evidence="2">
    <location>
        <begin position="1"/>
        <end position="22"/>
    </location>
</feature>
<feature type="propeptide" id="PRO_0000028281" description="Activation peptide">
    <location>
        <begin position="23"/>
        <end position="27"/>
    </location>
</feature>
<feature type="chain" id="PRO_0000028282" description="Trypsin eta">
    <location>
        <begin position="28"/>
        <end position="258"/>
    </location>
</feature>
<feature type="domain" description="Peptidase S1" evidence="3">
    <location>
        <begin position="28"/>
        <end position="258"/>
    </location>
</feature>
<feature type="active site" description="Charge relay system" evidence="1">
    <location>
        <position position="74"/>
    </location>
</feature>
<feature type="active site" description="Charge relay system" evidence="1">
    <location>
        <position position="120"/>
    </location>
</feature>
<feature type="active site" description="Charge relay system" evidence="1">
    <location>
        <position position="215"/>
    </location>
</feature>
<feature type="site" description="Required for specificity" evidence="1">
    <location>
        <position position="209"/>
    </location>
</feature>
<feature type="disulfide bond" evidence="3">
    <location>
        <begin position="59"/>
        <end position="75"/>
    </location>
</feature>
<feature type="disulfide bond" evidence="3">
    <location>
        <begin position="185"/>
        <end position="200"/>
    </location>
</feature>
<feature type="disulfide bond" evidence="3">
    <location>
        <begin position="211"/>
        <end position="235"/>
    </location>
</feature>
<dbReference type="EC" id="3.4.21.4"/>
<dbReference type="EMBL" id="U40653">
    <property type="protein sequence ID" value="AAA83237.1"/>
    <property type="molecule type" value="Genomic_DNA"/>
</dbReference>
<dbReference type="SMR" id="P54629"/>
<dbReference type="MEROPS" id="S01.117"/>
<dbReference type="eggNOG" id="KOG3627">
    <property type="taxonomic scope" value="Eukaryota"/>
</dbReference>
<dbReference type="OrthoDB" id="10059102at2759"/>
<dbReference type="GO" id="GO:0005576">
    <property type="term" value="C:extracellular region"/>
    <property type="evidence" value="ECO:0007669"/>
    <property type="project" value="UniProtKB-SubCell"/>
</dbReference>
<dbReference type="GO" id="GO:0004252">
    <property type="term" value="F:serine-type endopeptidase activity"/>
    <property type="evidence" value="ECO:0007669"/>
    <property type="project" value="UniProtKB-EC"/>
</dbReference>
<dbReference type="GO" id="GO:0006508">
    <property type="term" value="P:proteolysis"/>
    <property type="evidence" value="ECO:0007669"/>
    <property type="project" value="UniProtKB-KW"/>
</dbReference>
<dbReference type="CDD" id="cd00190">
    <property type="entry name" value="Tryp_SPc"/>
    <property type="match status" value="1"/>
</dbReference>
<dbReference type="FunFam" id="2.40.10.10:FF:000047">
    <property type="entry name" value="Trypsin eta"/>
    <property type="match status" value="1"/>
</dbReference>
<dbReference type="Gene3D" id="2.40.10.10">
    <property type="entry name" value="Trypsin-like serine proteases"/>
    <property type="match status" value="1"/>
</dbReference>
<dbReference type="InterPro" id="IPR050430">
    <property type="entry name" value="Peptidase_S1"/>
</dbReference>
<dbReference type="InterPro" id="IPR009003">
    <property type="entry name" value="Peptidase_S1_PA"/>
</dbReference>
<dbReference type="InterPro" id="IPR043504">
    <property type="entry name" value="Peptidase_S1_PA_chymotrypsin"/>
</dbReference>
<dbReference type="InterPro" id="IPR001314">
    <property type="entry name" value="Peptidase_S1A"/>
</dbReference>
<dbReference type="InterPro" id="IPR001254">
    <property type="entry name" value="Trypsin_dom"/>
</dbReference>
<dbReference type="InterPro" id="IPR033116">
    <property type="entry name" value="TRYPSIN_SER"/>
</dbReference>
<dbReference type="PANTHER" id="PTHR24276:SF91">
    <property type="entry name" value="AT26814P-RELATED"/>
    <property type="match status" value="1"/>
</dbReference>
<dbReference type="PANTHER" id="PTHR24276">
    <property type="entry name" value="POLYSERASE-RELATED"/>
    <property type="match status" value="1"/>
</dbReference>
<dbReference type="Pfam" id="PF00089">
    <property type="entry name" value="Trypsin"/>
    <property type="match status" value="1"/>
</dbReference>
<dbReference type="PRINTS" id="PR00722">
    <property type="entry name" value="CHYMOTRYPSIN"/>
</dbReference>
<dbReference type="SMART" id="SM00020">
    <property type="entry name" value="Tryp_SPc"/>
    <property type="match status" value="1"/>
</dbReference>
<dbReference type="SUPFAM" id="SSF50494">
    <property type="entry name" value="Trypsin-like serine proteases"/>
    <property type="match status" value="1"/>
</dbReference>
<dbReference type="PROSITE" id="PS50240">
    <property type="entry name" value="TRYPSIN_DOM"/>
    <property type="match status" value="1"/>
</dbReference>
<dbReference type="PROSITE" id="PS00135">
    <property type="entry name" value="TRYPSIN_SER"/>
    <property type="match status" value="1"/>
</dbReference>
<keyword id="KW-1015">Disulfide bond</keyword>
<keyword id="KW-0378">Hydrolase</keyword>
<keyword id="KW-0645">Protease</keyword>
<keyword id="KW-0964">Secreted</keyword>
<keyword id="KW-0720">Serine protease</keyword>
<keyword id="KW-0732">Signal</keyword>
<keyword id="KW-0865">Zymogen</keyword>
<reference key="1">
    <citation type="journal article" date="1999" name="Mol. Biol. Evol.">
        <title>Concerted evolution within a trypsin gene cluster in Drosophila.</title>
        <authorList>
            <person name="Wang S."/>
            <person name="Magoulas C."/>
            <person name="Hickey D.A."/>
        </authorList>
    </citation>
    <scope>NUCLEOTIDE SEQUENCE [GENOMIC DNA]</scope>
</reference>
<gene>
    <name type="primary">etaTry</name>
</gene>
<comment type="catalytic activity">
    <reaction>
        <text>Preferential cleavage: Arg-|-Xaa, Lys-|-Xaa.</text>
        <dbReference type="EC" id="3.4.21.4"/>
    </reaction>
</comment>
<comment type="subcellular location">
    <subcellularLocation>
        <location>Secreted</location>
        <location>Extracellular space</location>
    </subcellularLocation>
</comment>
<comment type="similarity">
    <text evidence="3">Belongs to the peptidase S1 family.</text>
</comment>
<sequence>MNKVILRILALLFLLGIGAVSAQPDGRIVGGADTTNYHTKYVVQLRRRSSPSSSYAQTCGGCILDAVTIATAAHCVYNREAENFLVVAGDDSRGGMSGVVVRVSKLIPHELYNATIMDNDIALVIVDPPLPLASSSTMEAIEIAAEQPAVGVQATISGWGYTKENGLSSDQLQQVNVPVVDSEKCQEAYYWRPISEGMLCAGLSEGGKDACQGDSGGPLVVANKLAGIVSWGEGCARPNYPGVYANVAYFKDWIASRV</sequence>
<accession>P54629</accession>
<protein>
    <recommendedName>
        <fullName>Trypsin eta</fullName>
        <ecNumber>3.4.21.4</ecNumber>
    </recommendedName>
</protein>
<proteinExistence type="inferred from homology"/>